<feature type="chain" id="PRO_0000348354" description="Glyoxylate/hydroxypyruvate reductase A">
    <location>
        <begin position="1"/>
        <end position="312"/>
    </location>
</feature>
<feature type="active site" evidence="1">
    <location>
        <position position="227"/>
    </location>
</feature>
<feature type="active site" description="Proton donor" evidence="1">
    <location>
        <position position="275"/>
    </location>
</feature>
<accession>Q8X9K1</accession>
<accession>Q7AFB5</accession>
<evidence type="ECO:0000255" key="1">
    <source>
        <dbReference type="HAMAP-Rule" id="MF_01666"/>
    </source>
</evidence>
<evidence type="ECO:0000305" key="2"/>
<organism>
    <name type="scientific">Escherichia coli O157:H7</name>
    <dbReference type="NCBI Taxonomy" id="83334"/>
    <lineage>
        <taxon>Bacteria</taxon>
        <taxon>Pseudomonadati</taxon>
        <taxon>Pseudomonadota</taxon>
        <taxon>Gammaproteobacteria</taxon>
        <taxon>Enterobacterales</taxon>
        <taxon>Enterobacteriaceae</taxon>
        <taxon>Escherichia</taxon>
    </lineage>
</organism>
<dbReference type="EC" id="1.1.1.79" evidence="1"/>
<dbReference type="EC" id="1.1.1.81" evidence="1"/>
<dbReference type="EMBL" id="AE005174">
    <property type="protein sequence ID" value="AAG55779.1"/>
    <property type="status" value="ALT_INIT"/>
    <property type="molecule type" value="Genomic_DNA"/>
</dbReference>
<dbReference type="EMBL" id="BA000007">
    <property type="protein sequence ID" value="BAB34833.1"/>
    <property type="status" value="ALT_INIT"/>
    <property type="molecule type" value="Genomic_DNA"/>
</dbReference>
<dbReference type="PIR" id="B90805">
    <property type="entry name" value="B90805"/>
</dbReference>
<dbReference type="PIR" id="G85664">
    <property type="entry name" value="G85664"/>
</dbReference>
<dbReference type="RefSeq" id="NP_309437.1">
    <property type="nucleotide sequence ID" value="NC_002695.1"/>
</dbReference>
<dbReference type="RefSeq" id="WP_000351284.1">
    <property type="nucleotide sequence ID" value="NZ_VOAI01000018.1"/>
</dbReference>
<dbReference type="SMR" id="Q8X9K1"/>
<dbReference type="STRING" id="155864.Z1666"/>
<dbReference type="GeneID" id="914357"/>
<dbReference type="KEGG" id="ece:Z1666"/>
<dbReference type="KEGG" id="ecs:ECs_1410"/>
<dbReference type="PATRIC" id="fig|386585.9.peg.1509"/>
<dbReference type="eggNOG" id="COG0111">
    <property type="taxonomic scope" value="Bacteria"/>
</dbReference>
<dbReference type="HOGENOM" id="CLU_019796_1_0_6"/>
<dbReference type="OMA" id="VQMAEYV"/>
<dbReference type="Proteomes" id="UP000000558">
    <property type="component" value="Chromosome"/>
</dbReference>
<dbReference type="Proteomes" id="UP000002519">
    <property type="component" value="Chromosome"/>
</dbReference>
<dbReference type="GO" id="GO:0005829">
    <property type="term" value="C:cytosol"/>
    <property type="evidence" value="ECO:0007669"/>
    <property type="project" value="UniProtKB-ARBA"/>
</dbReference>
<dbReference type="GO" id="GO:0030267">
    <property type="term" value="F:glyoxylate reductase (NADPH) activity"/>
    <property type="evidence" value="ECO:0007669"/>
    <property type="project" value="UniProtKB-UniRule"/>
</dbReference>
<dbReference type="GO" id="GO:0008465">
    <property type="term" value="F:hydroxypyruvate reductase (NADH) activity"/>
    <property type="evidence" value="ECO:0007669"/>
    <property type="project" value="RHEA"/>
</dbReference>
<dbReference type="GO" id="GO:0120509">
    <property type="term" value="F:hydroxypyruvate reductase (NADPH) activity"/>
    <property type="evidence" value="ECO:0007669"/>
    <property type="project" value="RHEA"/>
</dbReference>
<dbReference type="GO" id="GO:0051287">
    <property type="term" value="F:NAD binding"/>
    <property type="evidence" value="ECO:0007669"/>
    <property type="project" value="InterPro"/>
</dbReference>
<dbReference type="CDD" id="cd12164">
    <property type="entry name" value="GDH_like_2"/>
    <property type="match status" value="1"/>
</dbReference>
<dbReference type="FunFam" id="3.40.50.720:FF:000110">
    <property type="entry name" value="Glyoxylate/hydroxypyruvate reductase A"/>
    <property type="match status" value="1"/>
</dbReference>
<dbReference type="Gene3D" id="3.40.50.720">
    <property type="entry name" value="NAD(P)-binding Rossmann-like Domain"/>
    <property type="match status" value="2"/>
</dbReference>
<dbReference type="HAMAP" id="MF_01666">
    <property type="entry name" value="2_Hacid_dh_C_GhrA"/>
    <property type="match status" value="1"/>
</dbReference>
<dbReference type="InterPro" id="IPR029753">
    <property type="entry name" value="D-isomer_DH_CS"/>
</dbReference>
<dbReference type="InterPro" id="IPR006140">
    <property type="entry name" value="D-isomer_DH_NAD-bd"/>
</dbReference>
<dbReference type="InterPro" id="IPR023514">
    <property type="entry name" value="GhrA_Enterobacterales"/>
</dbReference>
<dbReference type="InterPro" id="IPR036291">
    <property type="entry name" value="NAD(P)-bd_dom_sf"/>
</dbReference>
<dbReference type="NCBIfam" id="NF012013">
    <property type="entry name" value="PRK15469.1"/>
    <property type="match status" value="1"/>
</dbReference>
<dbReference type="PANTHER" id="PTHR43333">
    <property type="entry name" value="2-HACID_DH_C DOMAIN-CONTAINING PROTEIN"/>
    <property type="match status" value="1"/>
</dbReference>
<dbReference type="PANTHER" id="PTHR43333:SF1">
    <property type="entry name" value="D-ISOMER SPECIFIC 2-HYDROXYACID DEHYDROGENASE NAD-BINDING DOMAIN-CONTAINING PROTEIN"/>
    <property type="match status" value="1"/>
</dbReference>
<dbReference type="Pfam" id="PF02826">
    <property type="entry name" value="2-Hacid_dh_C"/>
    <property type="match status" value="1"/>
</dbReference>
<dbReference type="SUPFAM" id="SSF51735">
    <property type="entry name" value="NAD(P)-binding Rossmann-fold domains"/>
    <property type="match status" value="1"/>
</dbReference>
<dbReference type="PROSITE" id="PS00671">
    <property type="entry name" value="D_2_HYDROXYACID_DH_3"/>
    <property type="match status" value="1"/>
</dbReference>
<sequence length="312" mass="35359">MDIIFYHPTFDTQWWIEALRKAIPQARVRAWKSGDNDSADYALAWHPPVEMLAGRDLKAVFALGAGVDSILSKLQAHPEMLKPSVPLFRLEDTGMGEQMQEYAVSQVLHWFRRFDDYRIQQNSSHWQPLPEYHREDFTIGILGAGVLGSKVAQSLQTWRFPLRCWSRTRKSWPGVQSFAGWEELSAFLSQCRVLINLLPNTPETVGIINQQLLEKLPDGAYLLNLARGVHVVEDDLLAALDSGKVKGAMLDVFNREPLPPESPLWQHPRVTITPHVAAITRPAEAVEYISRTIAQLEKGERVCGQVDRARGY</sequence>
<gene>
    <name evidence="1" type="primary">ghrA</name>
    <name type="ordered locus">Z1666</name>
    <name type="ordered locus">ECs1410</name>
</gene>
<reference key="1">
    <citation type="journal article" date="2001" name="Nature">
        <title>Genome sequence of enterohaemorrhagic Escherichia coli O157:H7.</title>
        <authorList>
            <person name="Perna N.T."/>
            <person name="Plunkett G. III"/>
            <person name="Burland V."/>
            <person name="Mau B."/>
            <person name="Glasner J.D."/>
            <person name="Rose D.J."/>
            <person name="Mayhew G.F."/>
            <person name="Evans P.S."/>
            <person name="Gregor J."/>
            <person name="Kirkpatrick H.A."/>
            <person name="Posfai G."/>
            <person name="Hackett J."/>
            <person name="Klink S."/>
            <person name="Boutin A."/>
            <person name="Shao Y."/>
            <person name="Miller L."/>
            <person name="Grotbeck E.J."/>
            <person name="Davis N.W."/>
            <person name="Lim A."/>
            <person name="Dimalanta E.T."/>
            <person name="Potamousis K."/>
            <person name="Apodaca J."/>
            <person name="Anantharaman T.S."/>
            <person name="Lin J."/>
            <person name="Yen G."/>
            <person name="Schwartz D.C."/>
            <person name="Welch R.A."/>
            <person name="Blattner F.R."/>
        </authorList>
    </citation>
    <scope>NUCLEOTIDE SEQUENCE [LARGE SCALE GENOMIC DNA]</scope>
    <source>
        <strain>O157:H7 / EDL933 / ATCC 700927 / EHEC</strain>
    </source>
</reference>
<reference key="2">
    <citation type="journal article" date="2001" name="DNA Res.">
        <title>Complete genome sequence of enterohemorrhagic Escherichia coli O157:H7 and genomic comparison with a laboratory strain K-12.</title>
        <authorList>
            <person name="Hayashi T."/>
            <person name="Makino K."/>
            <person name="Ohnishi M."/>
            <person name="Kurokawa K."/>
            <person name="Ishii K."/>
            <person name="Yokoyama K."/>
            <person name="Han C.-G."/>
            <person name="Ohtsubo E."/>
            <person name="Nakayama K."/>
            <person name="Murata T."/>
            <person name="Tanaka M."/>
            <person name="Tobe T."/>
            <person name="Iida T."/>
            <person name="Takami H."/>
            <person name="Honda T."/>
            <person name="Sasakawa C."/>
            <person name="Ogasawara N."/>
            <person name="Yasunaga T."/>
            <person name="Kuhara S."/>
            <person name="Shiba T."/>
            <person name="Hattori M."/>
            <person name="Shinagawa H."/>
        </authorList>
    </citation>
    <scope>NUCLEOTIDE SEQUENCE [LARGE SCALE GENOMIC DNA]</scope>
    <source>
        <strain>O157:H7 / Sakai / RIMD 0509952 / EHEC</strain>
    </source>
</reference>
<protein>
    <recommendedName>
        <fullName evidence="1">Glyoxylate/hydroxypyruvate reductase A</fullName>
        <ecNumber evidence="1">1.1.1.79</ecNumber>
        <ecNumber evidence="1">1.1.1.81</ecNumber>
    </recommendedName>
    <alternativeName>
        <fullName evidence="1">2-ketoacid reductase</fullName>
    </alternativeName>
</protein>
<keyword id="KW-0963">Cytoplasm</keyword>
<keyword id="KW-0520">NAD</keyword>
<keyword id="KW-0521">NADP</keyword>
<keyword id="KW-0560">Oxidoreductase</keyword>
<keyword id="KW-1185">Reference proteome</keyword>
<name>GHRA_ECO57</name>
<proteinExistence type="inferred from homology"/>
<comment type="function">
    <text evidence="1">Catalyzes the NADPH-dependent reduction of glyoxylate and hydroxypyruvate into glycolate and glycerate, respectively.</text>
</comment>
<comment type="catalytic activity">
    <reaction evidence="1">
        <text>glycolate + NADP(+) = glyoxylate + NADPH + H(+)</text>
        <dbReference type="Rhea" id="RHEA:10992"/>
        <dbReference type="ChEBI" id="CHEBI:15378"/>
        <dbReference type="ChEBI" id="CHEBI:29805"/>
        <dbReference type="ChEBI" id="CHEBI:36655"/>
        <dbReference type="ChEBI" id="CHEBI:57783"/>
        <dbReference type="ChEBI" id="CHEBI:58349"/>
        <dbReference type="EC" id="1.1.1.79"/>
    </reaction>
</comment>
<comment type="catalytic activity">
    <reaction evidence="1">
        <text>(R)-glycerate + NAD(+) = 3-hydroxypyruvate + NADH + H(+)</text>
        <dbReference type="Rhea" id="RHEA:17905"/>
        <dbReference type="ChEBI" id="CHEBI:15378"/>
        <dbReference type="ChEBI" id="CHEBI:16659"/>
        <dbReference type="ChEBI" id="CHEBI:17180"/>
        <dbReference type="ChEBI" id="CHEBI:57540"/>
        <dbReference type="ChEBI" id="CHEBI:57945"/>
        <dbReference type="EC" id="1.1.1.81"/>
    </reaction>
</comment>
<comment type="catalytic activity">
    <reaction evidence="1">
        <text>(R)-glycerate + NADP(+) = 3-hydroxypyruvate + NADPH + H(+)</text>
        <dbReference type="Rhea" id="RHEA:18657"/>
        <dbReference type="ChEBI" id="CHEBI:15378"/>
        <dbReference type="ChEBI" id="CHEBI:16659"/>
        <dbReference type="ChEBI" id="CHEBI:17180"/>
        <dbReference type="ChEBI" id="CHEBI:57783"/>
        <dbReference type="ChEBI" id="CHEBI:58349"/>
        <dbReference type="EC" id="1.1.1.81"/>
    </reaction>
</comment>
<comment type="subcellular location">
    <subcellularLocation>
        <location evidence="1">Cytoplasm</location>
    </subcellularLocation>
</comment>
<comment type="similarity">
    <text evidence="1">Belongs to the D-isomer specific 2-hydroxyacid dehydrogenase family. GhrA subfamily.</text>
</comment>
<comment type="sequence caution" evidence="2">
    <conflict type="erroneous initiation">
        <sequence resource="EMBL-CDS" id="AAG55779"/>
    </conflict>
</comment>
<comment type="sequence caution" evidence="2">
    <conflict type="erroneous initiation">
        <sequence resource="EMBL-CDS" id="BAB34833"/>
    </conflict>
</comment>